<organism>
    <name type="scientific">Macaca nemestrina</name>
    <name type="common">Pig-tailed macaque</name>
    <dbReference type="NCBI Taxonomy" id="9545"/>
    <lineage>
        <taxon>Eukaryota</taxon>
        <taxon>Metazoa</taxon>
        <taxon>Chordata</taxon>
        <taxon>Craniata</taxon>
        <taxon>Vertebrata</taxon>
        <taxon>Euteleostomi</taxon>
        <taxon>Mammalia</taxon>
        <taxon>Eutheria</taxon>
        <taxon>Euarchontoglires</taxon>
        <taxon>Primates</taxon>
        <taxon>Haplorrhini</taxon>
        <taxon>Catarrhini</taxon>
        <taxon>Cercopithecidae</taxon>
        <taxon>Cercopithecinae</taxon>
        <taxon>Macaca</taxon>
    </lineage>
</organism>
<protein>
    <recommendedName>
        <fullName>Major prion protein</fullName>
        <shortName>PrP</shortName>
    </recommendedName>
    <alternativeName>
        <fullName>PrP27-30</fullName>
    </alternativeName>
    <alternativeName>
        <fullName>PrP33-35C</fullName>
    </alternativeName>
    <cdAntigenName>CD230</cdAntigenName>
</protein>
<evidence type="ECO:0000250" key="1"/>
<evidence type="ECO:0000250" key="2">
    <source>
        <dbReference type="UniProtKB" id="P04156"/>
    </source>
</evidence>
<evidence type="ECO:0000250" key="3">
    <source>
        <dbReference type="UniProtKB" id="P04273"/>
    </source>
</evidence>
<evidence type="ECO:0000250" key="4">
    <source>
        <dbReference type="UniProtKB" id="P04925"/>
    </source>
</evidence>
<evidence type="ECO:0000255" key="5"/>
<evidence type="ECO:0000256" key="6">
    <source>
        <dbReference type="SAM" id="MobiDB-lite"/>
    </source>
</evidence>
<evidence type="ECO:0000305" key="7"/>
<feature type="signal peptide" evidence="1">
    <location>
        <begin position="1"/>
        <end position="22"/>
    </location>
</feature>
<feature type="chain" id="PRO_0000025687" description="Major prion protein">
    <location>
        <begin position="23"/>
        <end position="230"/>
    </location>
</feature>
<feature type="propeptide" id="PRO_0000025688" description="Removed in mature form" evidence="1">
    <location>
        <begin position="231"/>
        <end position="253"/>
    </location>
</feature>
<feature type="repeat" description="1">
    <location>
        <begin position="51"/>
        <end position="59"/>
    </location>
</feature>
<feature type="repeat" description="2">
    <location>
        <begin position="60"/>
        <end position="67"/>
    </location>
</feature>
<feature type="repeat" description="3">
    <location>
        <begin position="68"/>
        <end position="75"/>
    </location>
</feature>
<feature type="repeat" description="4">
    <location>
        <begin position="76"/>
        <end position="83"/>
    </location>
</feature>
<feature type="repeat" description="5">
    <location>
        <begin position="84"/>
        <end position="91"/>
    </location>
</feature>
<feature type="region of interest" description="Interaction with GRB2, ERI3 and SYN1" evidence="4">
    <location>
        <begin position="23"/>
        <end position="230"/>
    </location>
</feature>
<feature type="region of interest" description="Disordered" evidence="6">
    <location>
        <begin position="26"/>
        <end position="108"/>
    </location>
</feature>
<feature type="region of interest" description="5 X 8 AA tandem repeats of P-H-G-G-G-W-G-Q">
    <location>
        <begin position="51"/>
        <end position="91"/>
    </location>
</feature>
<feature type="compositionally biased region" description="Gly residues" evidence="6">
    <location>
        <begin position="52"/>
        <end position="95"/>
    </location>
</feature>
<feature type="compositionally biased region" description="Basic residues" evidence="6">
    <location>
        <begin position="98"/>
        <end position="108"/>
    </location>
</feature>
<feature type="binding site" evidence="2">
    <location>
        <position position="61"/>
    </location>
    <ligand>
        <name>Cu(2+)</name>
        <dbReference type="ChEBI" id="CHEBI:29036"/>
        <label>1</label>
    </ligand>
</feature>
<feature type="binding site" evidence="2">
    <location>
        <position position="62"/>
    </location>
    <ligand>
        <name>Cu(2+)</name>
        <dbReference type="ChEBI" id="CHEBI:29036"/>
        <label>1</label>
    </ligand>
</feature>
<feature type="binding site" evidence="2">
    <location>
        <position position="63"/>
    </location>
    <ligand>
        <name>Cu(2+)</name>
        <dbReference type="ChEBI" id="CHEBI:29036"/>
        <label>1</label>
    </ligand>
</feature>
<feature type="binding site" evidence="2">
    <location>
        <position position="69"/>
    </location>
    <ligand>
        <name>Cu(2+)</name>
        <dbReference type="ChEBI" id="CHEBI:29036"/>
        <label>2</label>
    </ligand>
</feature>
<feature type="binding site" evidence="2">
    <location>
        <position position="70"/>
    </location>
    <ligand>
        <name>Cu(2+)</name>
        <dbReference type="ChEBI" id="CHEBI:29036"/>
        <label>2</label>
    </ligand>
</feature>
<feature type="binding site" evidence="2">
    <location>
        <position position="71"/>
    </location>
    <ligand>
        <name>Cu(2+)</name>
        <dbReference type="ChEBI" id="CHEBI:29036"/>
        <label>2</label>
    </ligand>
</feature>
<feature type="binding site" evidence="2">
    <location>
        <position position="77"/>
    </location>
    <ligand>
        <name>Cu(2+)</name>
        <dbReference type="ChEBI" id="CHEBI:29036"/>
        <label>3</label>
    </ligand>
</feature>
<feature type="binding site" evidence="2">
    <location>
        <position position="78"/>
    </location>
    <ligand>
        <name>Cu(2+)</name>
        <dbReference type="ChEBI" id="CHEBI:29036"/>
        <label>3</label>
    </ligand>
</feature>
<feature type="binding site" evidence="2">
    <location>
        <position position="79"/>
    </location>
    <ligand>
        <name>Cu(2+)</name>
        <dbReference type="ChEBI" id="CHEBI:29036"/>
        <label>3</label>
    </ligand>
</feature>
<feature type="binding site" evidence="2">
    <location>
        <position position="85"/>
    </location>
    <ligand>
        <name>Cu(2+)</name>
        <dbReference type="ChEBI" id="CHEBI:29036"/>
        <label>4</label>
    </ligand>
</feature>
<feature type="binding site" evidence="2">
    <location>
        <position position="86"/>
    </location>
    <ligand>
        <name>Cu(2+)</name>
        <dbReference type="ChEBI" id="CHEBI:29036"/>
        <label>4</label>
    </ligand>
</feature>
<feature type="binding site" evidence="2">
    <location>
        <position position="87"/>
    </location>
    <ligand>
        <name>Cu(2+)</name>
        <dbReference type="ChEBI" id="CHEBI:29036"/>
        <label>4</label>
    </ligand>
</feature>
<feature type="lipid moiety-binding region" description="GPI-anchor amidated serine" evidence="3">
    <location>
        <position position="230"/>
    </location>
</feature>
<feature type="glycosylation site" description="N-linked (GlcNAc...) asparagine" evidence="5">
    <location>
        <position position="181"/>
    </location>
</feature>
<feature type="glycosylation site" description="N-linked (GlcNAc...) asparagine" evidence="5">
    <location>
        <position position="197"/>
    </location>
</feature>
<feature type="disulfide bond" evidence="3">
    <location>
        <begin position="179"/>
        <end position="214"/>
    </location>
</feature>
<comment type="function">
    <text evidence="2 4">Its primary physiological function is unclear. Has cytoprotective activity against internal or environmental stresses. May play a role in neuronal development and synaptic plasticity. May be required for neuronal myelin sheath maintenance. May play a role in iron uptake and iron homeostasis. Soluble oligomers are toxic to cultured neuroblastoma cells and induce apoptosis (in vitro). Association with GPC1 (via its heparan sulfate chains) targets PRNP to lipid rafts. Also provides Cu(2+) or Zn(2+) for the ascorbate-mediated GPC1 deaminase degradation of its heparan sulfate side chains (By similarity).</text>
</comment>
<comment type="subunit">
    <text evidence="2 4">Monomer and homodimer. Has a tendency to aggregate into amyloid fibrils containing a cross-beta spine, formed by a steric zipper of superposed beta-strands. Soluble oligomers may represent an intermediate stage on the path to fibril formation. Copper binding may promote oligomerization. Interacts with GRB2, APP, ERI3/PRNPIP and SYN1. Mislocalized cytosolically exposed PrP interacts with MGRN1; this interaction alters MGRN1 subcellular location and causes lysosomal enlargement. Interacts with KIAA1191.</text>
</comment>
<comment type="subcellular location">
    <subcellularLocation>
        <location evidence="2">Cell membrane</location>
        <topology evidence="2">Lipid-anchor</topology>
        <topology evidence="2">GPI-anchor</topology>
    </subcellularLocation>
    <subcellularLocation>
        <location evidence="4">Golgi apparatus</location>
    </subcellularLocation>
    <text evidence="2">Targeted to lipid rafts via association with the heparan sulfate chains of GPC1. Colocates, in the presence of Cu(2+), to vesicles in para- and perinuclear regions, where both proteins undergo internalization. Heparin displaces PRNP from lipid rafts and promotes endocytosis.</text>
</comment>
<comment type="domain">
    <text evidence="2">The normal, monomeric form has a mainly alpha-helical structure. The disease-associated, protease-resistant form forms amyloid fibrils containing a cross-beta spine, formed by a steric zipper of superposed beta-strands. Disease mutations may favor intermolecular contacts via short beta strands, and may thereby trigger oligomerization.</text>
</comment>
<comment type="domain">
    <text evidence="2">Contains an N-terminal region composed of octamer repeats. At low copper concentrations, the sidechains of His residues from three or four repeats contribute to the binding of a single copper ion. Alternatively, a copper ion can be bound by interaction with the sidechain and backbone amide nitrogen of a single His residue. The observed copper binding stoichiometry suggests that two repeat regions cooperate to stabilize the binding of a single copper ion. At higher copper concentrations, each octamer can bind one copper ion by interactions with the His sidechain and Gly backbone atoms. A mixture of binding types may occur, especially in the case of octamer repeat expansion. Copper binding may stabilize the conformation of this region and may promote oligomerization.</text>
</comment>
<comment type="disease">
    <text evidence="7">PrP is found in high quantity in the brain of humans and animals infected with the degenerative neurological diseases kuru, Creutzfeldt-Jakob disease (CJD), Gerstmann-Straussler syndrome (GSS), scrapie, bovine spongiform encephalopathy (BSE), transmissible mink encephalopathy (TME), etc.</text>
</comment>
<comment type="similarity">
    <text evidence="7">Belongs to the prion family.</text>
</comment>
<sequence>MANLGCWMLVLFVATWSDLGLCKKRPKPGGWNTGGSRYPGQGSPGGNRYPPQGGGGWGQPHGGGWGQPHGGGWGQPHGGGWGQPHGGGWGQGGGTHNQWHKPSKPKTSMKHMAGAAAAGAVVGGLGGYMLGSAMSRPLIHFGNDYEDRYYRENMYRYPNQVYYRPVDQYSNQNNFVHDCVNITIKQHTVTTTTKGENFTETDVKMMERVVEQMCITQYEKESQAYYQRGSSMVLFSSPPVILLISFLIFLIVG</sequence>
<proteinExistence type="inferred from homology"/>
<reference key="1">
    <citation type="journal article" date="1995" name="J. Mol. Biol.">
        <title>Prion protein gene variation among primates.</title>
        <authorList>
            <person name="Schaetzl H.M."/>
            <person name="Da Costa M."/>
            <person name="Taylor L."/>
            <person name="Cohen F.E."/>
            <person name="Prusiner S.B."/>
        </authorList>
    </citation>
    <scope>NUCLEOTIDE SEQUENCE [GENOMIC DNA]</scope>
</reference>
<reference key="2">
    <citation type="journal article" date="1997" name="J. Mol. Biol.">
        <authorList>
            <person name="Schaetzl H.M."/>
            <person name="Da Costa M."/>
            <person name="Taylor L."/>
            <person name="Cohen F.E."/>
            <person name="Prusiner S.B."/>
        </authorList>
    </citation>
    <scope>ERRATUM OF PUBMED:7837269</scope>
</reference>
<keyword id="KW-0034">Amyloid</keyword>
<keyword id="KW-1003">Cell membrane</keyword>
<keyword id="KW-0186">Copper</keyword>
<keyword id="KW-1015">Disulfide bond</keyword>
<keyword id="KW-0325">Glycoprotein</keyword>
<keyword id="KW-0333">Golgi apparatus</keyword>
<keyword id="KW-0336">GPI-anchor</keyword>
<keyword id="KW-0449">Lipoprotein</keyword>
<keyword id="KW-0472">Membrane</keyword>
<keyword id="KW-0479">Metal-binding</keyword>
<keyword id="KW-0640">Prion</keyword>
<keyword id="KW-1185">Reference proteome</keyword>
<keyword id="KW-0677">Repeat</keyword>
<keyword id="KW-0732">Signal</keyword>
<keyword id="KW-0862">Zinc</keyword>
<name>PRIO_MACNE</name>
<accession>P67995</accession>
<accession>P40254</accession>
<dbReference type="EMBL" id="U08306">
    <property type="protein sequence ID" value="AAC50094.1"/>
    <property type="molecule type" value="Genomic_DNA"/>
</dbReference>
<dbReference type="PIR" id="S71055">
    <property type="entry name" value="S71055"/>
</dbReference>
<dbReference type="RefSeq" id="XP_011739524.1">
    <property type="nucleotide sequence ID" value="XM_011741222.1"/>
</dbReference>
<dbReference type="RefSeq" id="XP_011739525.1">
    <property type="nucleotide sequence ID" value="XM_011741223.1"/>
</dbReference>
<dbReference type="SMR" id="P67995"/>
<dbReference type="GlyCosmos" id="P67995">
    <property type="glycosylation" value="2 sites, No reported glycans"/>
</dbReference>
<dbReference type="GeneID" id="105481568"/>
<dbReference type="Proteomes" id="UP000233120">
    <property type="component" value="Unassembled WGS sequence"/>
</dbReference>
<dbReference type="GO" id="GO:0005794">
    <property type="term" value="C:Golgi apparatus"/>
    <property type="evidence" value="ECO:0007669"/>
    <property type="project" value="UniProtKB-SubCell"/>
</dbReference>
<dbReference type="GO" id="GO:0005886">
    <property type="term" value="C:plasma membrane"/>
    <property type="evidence" value="ECO:0007669"/>
    <property type="project" value="UniProtKB-SubCell"/>
</dbReference>
<dbReference type="GO" id="GO:0098552">
    <property type="term" value="C:side of membrane"/>
    <property type="evidence" value="ECO:0007669"/>
    <property type="project" value="UniProtKB-KW"/>
</dbReference>
<dbReference type="GO" id="GO:0005507">
    <property type="term" value="F:copper ion binding"/>
    <property type="evidence" value="ECO:0000250"/>
    <property type="project" value="UniProtKB"/>
</dbReference>
<dbReference type="GO" id="GO:0051260">
    <property type="term" value="P:protein homooligomerization"/>
    <property type="evidence" value="ECO:0007669"/>
    <property type="project" value="InterPro"/>
</dbReference>
<dbReference type="FunFam" id="1.10.790.10:FF:000001">
    <property type="entry name" value="Major prion protein"/>
    <property type="match status" value="1"/>
</dbReference>
<dbReference type="Gene3D" id="1.10.790.10">
    <property type="entry name" value="Prion/Doppel protein, beta-ribbon domain"/>
    <property type="match status" value="1"/>
</dbReference>
<dbReference type="InterPro" id="IPR000817">
    <property type="entry name" value="Prion"/>
</dbReference>
<dbReference type="InterPro" id="IPR036924">
    <property type="entry name" value="Prion/Doppel_b-ribbon_dom_sf"/>
</dbReference>
<dbReference type="InterPro" id="IPR022416">
    <property type="entry name" value="Prion/Doppel_prot_b-ribbon_dom"/>
</dbReference>
<dbReference type="InterPro" id="IPR020949">
    <property type="entry name" value="Prion_copper_b_octapeptide"/>
</dbReference>
<dbReference type="InterPro" id="IPR025860">
    <property type="entry name" value="Prion_N"/>
</dbReference>
<dbReference type="PANTHER" id="PTHR15506">
    <property type="entry name" value="DOPPEL PRION"/>
    <property type="match status" value="1"/>
</dbReference>
<dbReference type="PANTHER" id="PTHR15506:SF2">
    <property type="entry name" value="MAJOR PRION PROTEIN"/>
    <property type="match status" value="1"/>
</dbReference>
<dbReference type="Pfam" id="PF00377">
    <property type="entry name" value="Prion"/>
    <property type="match status" value="1"/>
</dbReference>
<dbReference type="Pfam" id="PF11587">
    <property type="entry name" value="Prion_bPrPp"/>
    <property type="match status" value="1"/>
</dbReference>
<dbReference type="Pfam" id="PF03991">
    <property type="entry name" value="Prion_octapep"/>
    <property type="match status" value="1"/>
</dbReference>
<dbReference type="PRINTS" id="PR00341">
    <property type="entry name" value="PRION"/>
</dbReference>
<dbReference type="SMART" id="SM00157">
    <property type="entry name" value="PRP"/>
    <property type="match status" value="1"/>
</dbReference>
<dbReference type="SUPFAM" id="SSF54098">
    <property type="entry name" value="Prion-like"/>
    <property type="match status" value="1"/>
</dbReference>
<dbReference type="PROSITE" id="PS00291">
    <property type="entry name" value="PRION_1"/>
    <property type="match status" value="1"/>
</dbReference>
<dbReference type="PROSITE" id="PS00706">
    <property type="entry name" value="PRION_2"/>
    <property type="match status" value="1"/>
</dbReference>
<gene>
    <name type="primary">PRNP</name>
    <name type="synonym">PRP</name>
</gene>